<sequence length="13" mass="1375">QARPPHPPIPPAP</sequence>
<accession>P0DKZ9</accession>
<dbReference type="GO" id="GO:0005576">
    <property type="term" value="C:extracellular region"/>
    <property type="evidence" value="ECO:0007669"/>
    <property type="project" value="UniProtKB-SubCell"/>
</dbReference>
<dbReference type="GO" id="GO:0030414">
    <property type="term" value="F:peptidase inhibitor activity"/>
    <property type="evidence" value="ECO:0007669"/>
    <property type="project" value="UniProtKB-KW"/>
</dbReference>
<dbReference type="GO" id="GO:0090729">
    <property type="term" value="F:toxin activity"/>
    <property type="evidence" value="ECO:0007669"/>
    <property type="project" value="UniProtKB-KW"/>
</dbReference>
<dbReference type="GO" id="GO:0008217">
    <property type="term" value="P:regulation of blood pressure"/>
    <property type="evidence" value="ECO:0007669"/>
    <property type="project" value="UniProtKB-KW"/>
</dbReference>
<evidence type="ECO:0000250" key="1"/>
<evidence type="ECO:0000269" key="2">
    <source>
    </source>
</evidence>
<evidence type="ECO:0000305" key="3"/>
<comment type="function">
    <text evidence="1 2">This peptide both inhibits the activity of the angiotensin-converting enzyme (ACE) and enhances the action of bradykinin by inhibiting the peptidases that inactivate it. It acts as an indirect hypotensive agent (By similarity).</text>
</comment>
<comment type="subcellular location">
    <subcellularLocation>
        <location>Secreted</location>
    </subcellularLocation>
</comment>
<comment type="tissue specificity">
    <text>Expressed by the venom gland.</text>
</comment>
<comment type="mass spectrometry" mass="1356.5" method="Electrospray" evidence="2">
    <molecule>Bradykinin-potentiating peptide AP</molecule>
</comment>
<comment type="similarity">
    <text evidence="3">Belongs to the bradykinin-potentiating peptide family.</text>
</comment>
<organism>
    <name type="scientific">Bothrops fonsecai</name>
    <name type="common">Fonseca's lancehead</name>
    <name type="synonym">Rhinocerophis fonsecai</name>
    <dbReference type="NCBI Taxonomy" id="157549"/>
    <lineage>
        <taxon>Eukaryota</taxon>
        <taxon>Metazoa</taxon>
        <taxon>Chordata</taxon>
        <taxon>Craniata</taxon>
        <taxon>Vertebrata</taxon>
        <taxon>Euteleostomi</taxon>
        <taxon>Lepidosauria</taxon>
        <taxon>Squamata</taxon>
        <taxon>Bifurcata</taxon>
        <taxon>Unidentata</taxon>
        <taxon>Episquamata</taxon>
        <taxon>Toxicofera</taxon>
        <taxon>Serpentes</taxon>
        <taxon>Colubroidea</taxon>
        <taxon>Viperidae</taxon>
        <taxon>Crotalinae</taxon>
        <taxon>Bothrops</taxon>
    </lineage>
</organism>
<protein>
    <recommendedName>
        <fullName>Bradykinin-potentiating peptide AP</fullName>
        <shortName>BPP-AP</shortName>
    </recommendedName>
    <component>
        <recommendedName>
            <fullName>Bradykinin-potentiating peptide 11e</fullName>
            <shortName>BPP-11e</shortName>
        </recommendedName>
    </component>
</protein>
<keyword id="KW-0903">Direct protein sequencing</keyword>
<keyword id="KW-0382">Hypotensive agent</keyword>
<keyword id="KW-0481">Metalloenzyme inhibitor</keyword>
<keyword id="KW-0483">Metalloprotease inhibitor</keyword>
<keyword id="KW-0646">Protease inhibitor</keyword>
<keyword id="KW-0873">Pyrrolidone carboxylic acid</keyword>
<keyword id="KW-0964">Secreted</keyword>
<keyword id="KW-0800">Toxin</keyword>
<name>BPPAP_BOTFO</name>
<feature type="peptide" id="PRO_0000421911" description="Bradykinin-potentiating peptide AP">
    <location>
        <begin position="1"/>
        <end position="13"/>
    </location>
</feature>
<feature type="peptide" id="PRO_0000421912" description="Bradykinin-potentiating peptide 11e" evidence="1">
    <location>
        <begin position="1"/>
        <end position="11"/>
    </location>
</feature>
<feature type="modified residue" description="Pyrrolidone carboxylic acid" evidence="2">
    <location>
        <position position="1"/>
    </location>
</feature>
<feature type="unsure residue" description="Assigned by comparison with orthologs">
    <location>
        <position position="9"/>
    </location>
</feature>
<proteinExistence type="evidence at protein level"/>
<reference key="1">
    <citation type="journal article" date="2012" name="Mol. Cell. Proteomics">
        <title>Peptidomics of three Bothrops snake venoms: insights into the molecular diversification of proteomes and peptidomes.</title>
        <authorList>
            <person name="Tashima A.K."/>
            <person name="Zelanis A."/>
            <person name="Kitano E.S."/>
            <person name="Ianzer D."/>
            <person name="Melo R.L."/>
            <person name="Rioli V."/>
            <person name="Sant'anna S.S."/>
            <person name="Schenberg A.C."/>
            <person name="Camargo A.C."/>
            <person name="Serrano S.M.T."/>
        </authorList>
    </citation>
    <scope>PROTEIN SEQUENCE (BPP-AP AND BPP-11E)</scope>
    <scope>FUNCTION</scope>
    <scope>PYROGLUTAMATE FORMATION AT GLN-1</scope>
    <scope>MASS SPECTROMETRY</scope>
    <source>
        <tissue>Venom</tissue>
    </source>
</reference>